<dbReference type="EC" id="3.2.1.1" evidence="1"/>
<dbReference type="PIR" id="S75702">
    <property type="entry name" value="S75702"/>
</dbReference>
<dbReference type="PDB" id="1CLV">
    <property type="method" value="X-ray"/>
    <property type="resolution" value="2.00 A"/>
    <property type="chains" value="A=1-471"/>
</dbReference>
<dbReference type="PDB" id="1JAE">
    <property type="method" value="X-ray"/>
    <property type="resolution" value="1.65 A"/>
    <property type="chains" value="A=2-471"/>
</dbReference>
<dbReference type="PDB" id="1TMQ">
    <property type="method" value="X-ray"/>
    <property type="resolution" value="2.50 A"/>
    <property type="chains" value="A=1-471"/>
</dbReference>
<dbReference type="PDB" id="1VIW">
    <property type="method" value="X-ray"/>
    <property type="resolution" value="3.00 A"/>
    <property type="chains" value="A=2-471"/>
</dbReference>
<dbReference type="PDBsum" id="1CLV"/>
<dbReference type="PDBsum" id="1JAE"/>
<dbReference type="PDBsum" id="1TMQ"/>
<dbReference type="PDBsum" id="1VIW"/>
<dbReference type="SMR" id="P56634"/>
<dbReference type="MINT" id="P56634"/>
<dbReference type="BindingDB" id="P56634"/>
<dbReference type="ChEMBL" id="CHEMBL3580521"/>
<dbReference type="CAZy" id="GH13">
    <property type="family name" value="Glycoside Hydrolase Family 13"/>
</dbReference>
<dbReference type="EvolutionaryTrace" id="P56634"/>
<dbReference type="GO" id="GO:0004556">
    <property type="term" value="F:alpha-amylase activity"/>
    <property type="evidence" value="ECO:0000250"/>
    <property type="project" value="UniProtKB"/>
</dbReference>
<dbReference type="GO" id="GO:0005509">
    <property type="term" value="F:calcium ion binding"/>
    <property type="evidence" value="ECO:0000314"/>
    <property type="project" value="UniProtKB"/>
</dbReference>
<dbReference type="GO" id="GO:0031404">
    <property type="term" value="F:chloride ion binding"/>
    <property type="evidence" value="ECO:0000314"/>
    <property type="project" value="UniProtKB"/>
</dbReference>
<dbReference type="GO" id="GO:0016052">
    <property type="term" value="P:carbohydrate catabolic process"/>
    <property type="evidence" value="ECO:0000250"/>
    <property type="project" value="UniProtKB"/>
</dbReference>
<dbReference type="CDD" id="cd11317">
    <property type="entry name" value="AmyAc_bac_euk_AmyA"/>
    <property type="match status" value="1"/>
</dbReference>
<dbReference type="Gene3D" id="3.20.20.80">
    <property type="entry name" value="Glycosidases"/>
    <property type="match status" value="1"/>
</dbReference>
<dbReference type="Gene3D" id="2.60.40.1180">
    <property type="entry name" value="Golgi alpha-mannosidase II"/>
    <property type="match status" value="1"/>
</dbReference>
<dbReference type="InterPro" id="IPR006048">
    <property type="entry name" value="A-amylase/branching_C"/>
</dbReference>
<dbReference type="InterPro" id="IPR031319">
    <property type="entry name" value="A-amylase_C"/>
</dbReference>
<dbReference type="InterPro" id="IPR006046">
    <property type="entry name" value="Alpha_amylase"/>
</dbReference>
<dbReference type="InterPro" id="IPR006047">
    <property type="entry name" value="Glyco_hydro_13_cat_dom"/>
</dbReference>
<dbReference type="InterPro" id="IPR013780">
    <property type="entry name" value="Glyco_hydro_b"/>
</dbReference>
<dbReference type="InterPro" id="IPR017853">
    <property type="entry name" value="Glycoside_hydrolase_SF"/>
</dbReference>
<dbReference type="PANTHER" id="PTHR43447">
    <property type="entry name" value="ALPHA-AMYLASE"/>
    <property type="match status" value="1"/>
</dbReference>
<dbReference type="Pfam" id="PF00128">
    <property type="entry name" value="Alpha-amylase"/>
    <property type="match status" value="1"/>
</dbReference>
<dbReference type="Pfam" id="PF02806">
    <property type="entry name" value="Alpha-amylase_C"/>
    <property type="match status" value="1"/>
</dbReference>
<dbReference type="PRINTS" id="PR00110">
    <property type="entry name" value="ALPHAAMYLASE"/>
</dbReference>
<dbReference type="SMART" id="SM00642">
    <property type="entry name" value="Aamy"/>
    <property type="match status" value="1"/>
</dbReference>
<dbReference type="SMART" id="SM00632">
    <property type="entry name" value="Aamy_C"/>
    <property type="match status" value="1"/>
</dbReference>
<dbReference type="SUPFAM" id="SSF51445">
    <property type="entry name" value="(Trans)glycosidases"/>
    <property type="match status" value="1"/>
</dbReference>
<dbReference type="SUPFAM" id="SSF51011">
    <property type="entry name" value="Glycosyl hydrolase domain"/>
    <property type="match status" value="1"/>
</dbReference>
<name>AMY_TENMO</name>
<feature type="chain" id="PRO_0000054290" description="Alpha-amylase">
    <location>
        <begin position="1"/>
        <end position="471"/>
    </location>
</feature>
<feature type="region of interest" description="Disordered" evidence="2">
    <location>
        <begin position="326"/>
        <end position="346"/>
    </location>
</feature>
<feature type="compositionally biased region" description="Polar residues" evidence="2">
    <location>
        <begin position="326"/>
        <end position="343"/>
    </location>
</feature>
<feature type="active site" description="Nucleophile" evidence="8">
    <location>
        <position position="185"/>
    </location>
</feature>
<feature type="active site" description="Proton donor" evidence="8">
    <location>
        <position position="222"/>
    </location>
</feature>
<feature type="binding site" evidence="3 5 6 9">
    <location>
        <position position="98"/>
    </location>
    <ligand>
        <name>Ca(2+)</name>
        <dbReference type="ChEBI" id="CHEBI:29108"/>
    </ligand>
</feature>
<feature type="binding site" evidence="3 5 6 9">
    <location>
        <position position="146"/>
    </location>
    <ligand>
        <name>Ca(2+)</name>
        <dbReference type="ChEBI" id="CHEBI:29108"/>
    </ligand>
</feature>
<feature type="binding site" evidence="3 5 6 9">
    <location>
        <position position="155"/>
    </location>
    <ligand>
        <name>Ca(2+)</name>
        <dbReference type="ChEBI" id="CHEBI:29108"/>
    </ligand>
</feature>
<feature type="binding site" evidence="3 5 6 9">
    <location>
        <position position="183"/>
    </location>
    <ligand>
        <name>chloride</name>
        <dbReference type="ChEBI" id="CHEBI:17996"/>
    </ligand>
</feature>
<feature type="binding site" evidence="3 5 6 9">
    <location>
        <position position="189"/>
    </location>
    <ligand>
        <name>Ca(2+)</name>
        <dbReference type="ChEBI" id="CHEBI:29108"/>
    </ligand>
</feature>
<feature type="binding site" evidence="3 5 6 9">
    <location>
        <position position="285"/>
    </location>
    <ligand>
        <name>chloride</name>
        <dbReference type="ChEBI" id="CHEBI:17996"/>
    </ligand>
</feature>
<feature type="binding site" evidence="3 5 6 9">
    <location>
        <position position="321"/>
    </location>
    <ligand>
        <name>chloride</name>
        <dbReference type="ChEBI" id="CHEBI:17996"/>
    </ligand>
</feature>
<feature type="site" description="Transition state stabilizer" evidence="1">
    <location>
        <position position="287"/>
    </location>
</feature>
<feature type="modified residue" description="Pyrrolidone carboxylic acid" evidence="4 6">
    <location>
        <position position="1"/>
    </location>
</feature>
<feature type="disulfide bond" evidence="3 5 6 9">
    <location>
        <begin position="28"/>
        <end position="84"/>
    </location>
</feature>
<feature type="disulfide bond" evidence="3 5 6 9">
    <location>
        <begin position="134"/>
        <end position="148"/>
    </location>
</feature>
<feature type="disulfide bond" evidence="3 5 6 9">
    <location>
        <begin position="354"/>
        <end position="360"/>
    </location>
</feature>
<feature type="disulfide bond" evidence="3 5 6 9">
    <location>
        <begin position="425"/>
        <end position="437"/>
    </location>
</feature>
<feature type="strand" evidence="11">
    <location>
        <begin position="11"/>
        <end position="16"/>
    </location>
</feature>
<feature type="helix" evidence="11">
    <location>
        <begin position="21"/>
        <end position="30"/>
    </location>
</feature>
<feature type="turn" evidence="11">
    <location>
        <begin position="31"/>
        <end position="36"/>
    </location>
</feature>
<feature type="strand" evidence="11">
    <location>
        <begin position="37"/>
        <end position="41"/>
    </location>
</feature>
<feature type="helix" evidence="11">
    <location>
        <begin position="56"/>
        <end position="60"/>
    </location>
</feature>
<feature type="strand" evidence="10">
    <location>
        <begin position="61"/>
        <end position="63"/>
    </location>
</feature>
<feature type="strand" evidence="11">
    <location>
        <begin position="67"/>
        <end position="69"/>
    </location>
</feature>
<feature type="helix" evidence="11">
    <location>
        <begin position="74"/>
        <end position="86"/>
    </location>
</feature>
<feature type="strand" evidence="11">
    <location>
        <begin position="90"/>
        <end position="95"/>
    </location>
</feature>
<feature type="strand" evidence="11">
    <location>
        <begin position="105"/>
        <end position="107"/>
    </location>
</feature>
<feature type="strand" evidence="11">
    <location>
        <begin position="112"/>
        <end position="114"/>
    </location>
</feature>
<feature type="turn" evidence="11">
    <location>
        <begin position="115"/>
        <end position="118"/>
    </location>
</feature>
<feature type="turn" evidence="11">
    <location>
        <begin position="121"/>
        <end position="124"/>
    </location>
</feature>
<feature type="helix" evidence="11">
    <location>
        <begin position="127"/>
        <end position="129"/>
    </location>
</feature>
<feature type="helix" evidence="11">
    <location>
        <begin position="142"/>
        <end position="147"/>
    </location>
</feature>
<feature type="strand" evidence="11">
    <location>
        <begin position="148"/>
        <end position="150"/>
    </location>
</feature>
<feature type="helix" evidence="11">
    <location>
        <begin position="161"/>
        <end position="176"/>
    </location>
</feature>
<feature type="strand" evidence="11">
    <location>
        <begin position="181"/>
        <end position="184"/>
    </location>
</feature>
<feature type="helix" evidence="11">
    <location>
        <begin position="187"/>
        <end position="189"/>
    </location>
</feature>
<feature type="helix" evidence="11">
    <location>
        <begin position="192"/>
        <end position="200"/>
    </location>
</feature>
<feature type="helix" evidence="11">
    <location>
        <begin position="207"/>
        <end position="209"/>
    </location>
</feature>
<feature type="strand" evidence="11">
    <location>
        <begin position="218"/>
        <end position="222"/>
    </location>
</feature>
<feature type="strand" evidence="11">
    <location>
        <begin position="227"/>
        <end position="230"/>
    </location>
</feature>
<feature type="helix" evidence="11">
    <location>
        <begin position="233"/>
        <end position="235"/>
    </location>
</feature>
<feature type="turn" evidence="11">
    <location>
        <begin position="236"/>
        <end position="238"/>
    </location>
</feature>
<feature type="strand" evidence="11">
    <location>
        <begin position="239"/>
        <end position="243"/>
    </location>
</feature>
<feature type="helix" evidence="11">
    <location>
        <begin position="245"/>
        <end position="255"/>
    </location>
</feature>
<feature type="turn" evidence="11">
    <location>
        <begin position="256"/>
        <end position="258"/>
    </location>
</feature>
<feature type="helix" evidence="11">
    <location>
        <begin position="261"/>
        <end position="266"/>
    </location>
</feature>
<feature type="helix" evidence="11">
    <location>
        <begin position="269"/>
        <end position="271"/>
    </location>
</feature>
<feature type="helix" evidence="11">
    <location>
        <begin position="276"/>
        <end position="278"/>
    </location>
</feature>
<feature type="strand" evidence="11">
    <location>
        <begin position="279"/>
        <end position="281"/>
    </location>
</feature>
<feature type="helix" evidence="11">
    <location>
        <begin position="288"/>
        <end position="291"/>
    </location>
</feature>
<feature type="strand" evidence="10">
    <location>
        <begin position="292"/>
        <end position="296"/>
    </location>
</feature>
<feature type="helix" evidence="11">
    <location>
        <begin position="302"/>
        <end position="314"/>
    </location>
</feature>
<feature type="strand" evidence="11">
    <location>
        <begin position="317"/>
        <end position="324"/>
    </location>
</feature>
<feature type="strand" evidence="10">
    <location>
        <begin position="329"/>
        <end position="332"/>
    </location>
</feature>
<feature type="strand" evidence="12">
    <location>
        <begin position="335"/>
        <end position="337"/>
    </location>
</feature>
<feature type="strand" evidence="13">
    <location>
        <begin position="338"/>
        <end position="340"/>
    </location>
</feature>
<feature type="strand" evidence="12">
    <location>
        <begin position="347"/>
        <end position="349"/>
    </location>
</feature>
<feature type="turn" evidence="12">
    <location>
        <begin position="350"/>
        <end position="352"/>
    </location>
</feature>
<feature type="strand" evidence="12">
    <location>
        <begin position="353"/>
        <end position="355"/>
    </location>
</feature>
<feature type="helix" evidence="11">
    <location>
        <begin position="361"/>
        <end position="363"/>
    </location>
</feature>
<feature type="helix" evidence="11">
    <location>
        <begin position="365"/>
        <end position="376"/>
    </location>
</feature>
<feature type="turn" evidence="11">
    <location>
        <begin position="377"/>
        <end position="379"/>
    </location>
</feature>
<feature type="strand" evidence="11">
    <location>
        <begin position="382"/>
        <end position="387"/>
    </location>
</feature>
<feature type="strand" evidence="11">
    <location>
        <begin position="389"/>
        <end position="397"/>
    </location>
</feature>
<feature type="turn" evidence="11">
    <location>
        <begin position="398"/>
        <end position="400"/>
    </location>
</feature>
<feature type="strand" evidence="11">
    <location>
        <begin position="401"/>
        <end position="409"/>
    </location>
</feature>
<feature type="strand" evidence="11">
    <location>
        <begin position="411"/>
        <end position="416"/>
    </location>
</feature>
<feature type="strand" evidence="11">
    <location>
        <begin position="421"/>
        <end position="425"/>
    </location>
</feature>
<feature type="turn" evidence="11">
    <location>
        <begin position="427"/>
        <end position="429"/>
    </location>
</feature>
<feature type="strand" evidence="11">
    <location>
        <begin position="436"/>
        <end position="439"/>
    </location>
</feature>
<feature type="strand" evidence="11">
    <location>
        <begin position="441"/>
        <end position="444"/>
    </location>
</feature>
<feature type="strand" evidence="11">
    <location>
        <begin position="448"/>
        <end position="454"/>
    </location>
</feature>
<feature type="strand" evidence="11">
    <location>
        <begin position="461"/>
        <end position="466"/>
    </location>
</feature>
<feature type="helix" evidence="10">
    <location>
        <begin position="467"/>
        <end position="469"/>
    </location>
</feature>
<reference key="1">
    <citation type="journal article" date="1997" name="FEBS Lett.">
        <title>The alpha-amylase from the yellow meal worm: complete primary structure, crystallization and preliminary X-ray analysis.</title>
        <authorList>
            <person name="Strobl S."/>
            <person name="Gomis-Rueth F.-X."/>
            <person name="Maskos K."/>
            <person name="Frank G."/>
            <person name="Huber R."/>
            <person name="Glockshuber R."/>
        </authorList>
    </citation>
    <scope>PROTEIN SEQUENCE</scope>
    <scope>PYROGLUTAMATE FORMATION AT GLN-1</scope>
</reference>
<reference key="2">
    <citation type="journal article" date="1998" name="J. Mol. Biol.">
        <title>Crystal structure of yellow meal worm alpha-amylase at 1.64-A resolution.</title>
        <authorList>
            <person name="Strobl S."/>
            <person name="Maskos K."/>
            <person name="Betz M."/>
            <person name="Wiegand G."/>
            <person name="Huber R."/>
            <person name="Gomis-Rueth F.-X."/>
            <person name="Glockshuber R."/>
        </authorList>
    </citation>
    <scope>X-RAY CRYSTALLOGRAPHY (1.65 ANGSTROMS) OF 2-471 IN COMPLEX WITH CALCIUM AND CHLORIDE</scope>
    <scope>COFACTOR</scope>
    <scope>SUBUNIT</scope>
    <scope>DISULFIDE BONDS</scope>
</reference>
<reference key="3">
    <citation type="journal article" date="1998" name="Structure">
        <title>A novel strategy for inhibition of alpha-amylases: yellow meal worm alpha-amylase in complex with the Ragi bifunctional inhibitor at 2.5-A resolution.</title>
        <authorList>
            <person name="Strobl S."/>
            <person name="Maskos K."/>
            <person name="Wiegand G."/>
            <person name="Huber R."/>
            <person name="Gomis-Rueth F.-X."/>
            <person name="Glockshuber R."/>
        </authorList>
    </citation>
    <scope>X-RAY CRYSTALLOGRAPHY (2.50 ANGSTROMS) IN COMPLEX WITH CALCIUM AND CHLORIDE</scope>
    <scope>DISULFIDE BONDS</scope>
    <scope>COFACTOR</scope>
    <scope>PYROGLUTAMATE FORMATION AT GLN-1</scope>
</reference>
<reference key="4">
    <citation type="journal article" date="1999" name="Structure">
        <title>Specific inhibition of insect alpha-amylases: yellow meal worm alpha-amylase in complex with the amaranth alpha-amylase inhibitor at 2.0 A resolution.</title>
        <authorList>
            <person name="Pereira P.J."/>
            <person name="Lozanov V."/>
            <person name="Patthy A."/>
            <person name="Huber R."/>
            <person name="Bode W."/>
            <person name="Pongor S."/>
            <person name="Strobl S."/>
        </authorList>
    </citation>
    <scope>X-RAY CRYSTALLOGRAPHY (2.00 ANGSTROMS) IN COMPLEX WITH CALCIUM AND CHLORIDE</scope>
    <scope>DISULFIDE BONDS</scope>
    <scope>COFACTOR</scope>
</reference>
<keyword id="KW-0002">3D-structure</keyword>
<keyword id="KW-0106">Calcium</keyword>
<keyword id="KW-0119">Carbohydrate metabolism</keyword>
<keyword id="KW-0868">Chloride</keyword>
<keyword id="KW-0903">Direct protein sequencing</keyword>
<keyword id="KW-1015">Disulfide bond</keyword>
<keyword id="KW-0326">Glycosidase</keyword>
<keyword id="KW-0378">Hydrolase</keyword>
<keyword id="KW-0479">Metal-binding</keyword>
<keyword id="KW-0873">Pyrrolidone carboxylic acid</keyword>
<accession>P56634</accession>
<sequence>QKDANFASGRNSIVHLFEWKWNDIADECERFLQPQGFGGVQISPPNEYLVADGRPWWERYQPVSYIINTRSGDESAFTDMTRRCNDAGVRIYVDAVINHMTGMNGVGTSGSSADHDGMNYPAVPYGSGDFHSPCEVNNYQDADNVRNCELVGLRDLNQGSDYVRGVLIDYMNHMIDLGVAGFRVDAAKHMSPGDLSVIFSGLKNLNTDYGFADGARPFIYQEVIDLGGEAISKNEYTGFGCVLEFQFGVSLGNAFQGGNQLKNLANWGPEWGLLEGLDAVVFVDNHDNQRTGGSQILTYKNPKPYKMAIAFMLAHPYGTTRIMSSFDFTDNDQGPPQDGSGNLISPGINDDNTCSNGYVCEHRWRQVYGMVGFRNAVEGTQVENWWSNDDNQIAFSRGSQGFVAFTNGGDLNQNLNTGLPAGTYCDVISGELSGGSCTGKSVTVGDNGSADISLGSAEDDGVLAIHVNAKL</sequence>
<proteinExistence type="evidence at protein level"/>
<protein>
    <recommendedName>
        <fullName>Alpha-amylase</fullName>
        <ecNumber evidence="1">3.2.1.1</ecNumber>
    </recommendedName>
    <alternativeName>
        <fullName>1,4-alpha-D-glucan glucanohydrolase</fullName>
    </alternativeName>
</protein>
<evidence type="ECO:0000250" key="1">
    <source>
        <dbReference type="UniProtKB" id="P04746"/>
    </source>
</evidence>
<evidence type="ECO:0000256" key="2">
    <source>
        <dbReference type="SAM" id="MobiDB-lite"/>
    </source>
</evidence>
<evidence type="ECO:0000269" key="3">
    <source>
    </source>
</evidence>
<evidence type="ECO:0000269" key="4">
    <source>
    </source>
</evidence>
<evidence type="ECO:0000269" key="5">
    <source>
    </source>
</evidence>
<evidence type="ECO:0000269" key="6">
    <source>
    </source>
</evidence>
<evidence type="ECO:0000305" key="7"/>
<evidence type="ECO:0000305" key="8">
    <source>
    </source>
</evidence>
<evidence type="ECO:0007744" key="9">
    <source>
        <dbReference type="PDB" id="1JAE"/>
    </source>
</evidence>
<evidence type="ECO:0007829" key="10">
    <source>
        <dbReference type="PDB" id="1CLV"/>
    </source>
</evidence>
<evidence type="ECO:0007829" key="11">
    <source>
        <dbReference type="PDB" id="1JAE"/>
    </source>
</evidence>
<evidence type="ECO:0007829" key="12">
    <source>
        <dbReference type="PDB" id="1TMQ"/>
    </source>
</evidence>
<evidence type="ECO:0007829" key="13">
    <source>
        <dbReference type="PDB" id="1VIW"/>
    </source>
</evidence>
<organism>
    <name type="scientific">Tenebrio molitor</name>
    <name type="common">Yellow mealworm beetle</name>
    <dbReference type="NCBI Taxonomy" id="7067"/>
    <lineage>
        <taxon>Eukaryota</taxon>
        <taxon>Metazoa</taxon>
        <taxon>Ecdysozoa</taxon>
        <taxon>Arthropoda</taxon>
        <taxon>Hexapoda</taxon>
        <taxon>Insecta</taxon>
        <taxon>Pterygota</taxon>
        <taxon>Neoptera</taxon>
        <taxon>Endopterygota</taxon>
        <taxon>Coleoptera</taxon>
        <taxon>Polyphaga</taxon>
        <taxon>Cucujiformia</taxon>
        <taxon>Tenebrionidae</taxon>
        <taxon>Tenebrio</taxon>
    </lineage>
</organism>
<comment type="catalytic activity">
    <reaction evidence="1">
        <text>Endohydrolysis of (1-&gt;4)-alpha-D-glucosidic linkages in polysaccharides containing three or more (1-&gt;4)-alpha-linked D-glucose units.</text>
        <dbReference type="EC" id="3.2.1.1"/>
    </reaction>
</comment>
<comment type="cofactor">
    <cofactor evidence="3 5 6 9">
        <name>Ca(2+)</name>
        <dbReference type="ChEBI" id="CHEBI:29108"/>
    </cofactor>
    <text evidence="3 5 6 9">Binds 1 Ca(2+) ion per subunit.</text>
</comment>
<comment type="cofactor">
    <cofactor evidence="3 5 6 9">
        <name>chloride</name>
        <dbReference type="ChEBI" id="CHEBI:17996"/>
    </cofactor>
    <text evidence="3 5 6 9">Binds 1 Cl(-) ion per subunit.</text>
</comment>
<comment type="subunit">
    <text evidence="5">Monomer.</text>
</comment>
<comment type="similarity">
    <text evidence="7">Belongs to the glycosyl hydrolase 13 family.</text>
</comment>